<sequence length="87" mass="9535">MKHIDKGTVVRTVLLFIALVNQTLIMFGKPVLPVAEDQIHTLADALYSAGSAAFTIAASLVAWYKNNYVTSKGKMQKEVLQKKGLTK</sequence>
<accession>Q99165</accession>
<keyword id="KW-0472">Membrane</keyword>
<keyword id="KW-0812">Transmembrane</keyword>
<keyword id="KW-1133">Transmembrane helix</keyword>
<proteinExistence type="inferred from homology"/>
<name>YAL2_BACLI</name>
<comment type="subcellular location">
    <subcellularLocation>
        <location evidence="2">Membrane</location>
        <topology evidence="2">Single-pass membrane protein</topology>
    </subcellularLocation>
</comment>
<comment type="similarity">
    <text evidence="2">Belongs to the SPP1 holin family.</text>
</comment>
<gene>
    <name type="primary">xpaL2</name>
</gene>
<protein>
    <recommendedName>
        <fullName>Uncharacterized 9.5 kDa protein in ORF3 5'region</fullName>
    </recommendedName>
</protein>
<evidence type="ECO:0000255" key="1"/>
<evidence type="ECO:0000305" key="2"/>
<reference key="1">
    <citation type="journal article" date="1991" name="J. Gen. Microbiol.">
        <title>Identification of four unique clones encoding 10 kDa proteins from Bacillus that cause phenotypic complementation of a phoA mutant strain of Escherichia coli.</title>
        <authorList>
            <person name="Lee J.W.K."/>
            <person name="Edwards C.W."/>
            <person name="Hulett F.M."/>
        </authorList>
    </citation>
    <scope>NUCLEOTIDE SEQUENCE [GENOMIC DNA]</scope>
    <source>
        <strain>MC14</strain>
    </source>
</reference>
<organism>
    <name type="scientific">Bacillus licheniformis</name>
    <dbReference type="NCBI Taxonomy" id="1402"/>
    <lineage>
        <taxon>Bacteria</taxon>
        <taxon>Bacillati</taxon>
        <taxon>Bacillota</taxon>
        <taxon>Bacilli</taxon>
        <taxon>Bacillales</taxon>
        <taxon>Bacillaceae</taxon>
        <taxon>Bacillus</taxon>
    </lineage>
</organism>
<feature type="chain" id="PRO_0000164433" description="Uncharacterized 9.5 kDa protein in ORF3 5'region">
    <location>
        <begin position="1"/>
        <end position="87"/>
    </location>
</feature>
<feature type="transmembrane region" description="Helical" evidence="1">
    <location>
        <begin position="42"/>
        <end position="62"/>
    </location>
</feature>
<dbReference type="EMBL" id="M63942">
    <property type="protein sequence ID" value="AAA22887.1"/>
    <property type="molecule type" value="Genomic_DNA"/>
</dbReference>
<dbReference type="PIR" id="C49754">
    <property type="entry name" value="C49754"/>
</dbReference>
<dbReference type="RefSeq" id="WP_003180859.1">
    <property type="nucleotide sequence ID" value="NZ_BEXU01000022.1"/>
</dbReference>
<dbReference type="SMR" id="Q99165"/>
<dbReference type="GeneID" id="92862065"/>
<dbReference type="PATRIC" id="fig|1402.63.peg.622"/>
<dbReference type="OMA" id="VAEDQIH"/>
<dbReference type="GO" id="GO:0016020">
    <property type="term" value="C:membrane"/>
    <property type="evidence" value="ECO:0007669"/>
    <property type="project" value="UniProtKB-SubCell"/>
</dbReference>
<dbReference type="InterPro" id="IPR006479">
    <property type="entry name" value="Holin"/>
</dbReference>
<dbReference type="NCBIfam" id="TIGR01592">
    <property type="entry name" value="holin_SPP1"/>
    <property type="match status" value="1"/>
</dbReference>
<dbReference type="Pfam" id="PF04688">
    <property type="entry name" value="Holin_SPP1"/>
    <property type="match status" value="1"/>
</dbReference>